<feature type="signal peptide" description="Tat-type signal" evidence="1">
    <location>
        <begin position="1"/>
        <end position="32"/>
    </location>
</feature>
<feature type="chain" id="PRO_1000069720" description="Periplasmic nitrate reductase" evidence="1">
    <location>
        <begin position="33"/>
        <end position="827"/>
    </location>
</feature>
<feature type="domain" description="4Fe-4S Mo/W bis-MGD-type" evidence="1">
    <location>
        <begin position="37"/>
        <end position="93"/>
    </location>
</feature>
<feature type="binding site" evidence="1">
    <location>
        <position position="44"/>
    </location>
    <ligand>
        <name>[4Fe-4S] cluster</name>
        <dbReference type="ChEBI" id="CHEBI:49883"/>
    </ligand>
</feature>
<feature type="binding site" evidence="1">
    <location>
        <position position="47"/>
    </location>
    <ligand>
        <name>[4Fe-4S] cluster</name>
        <dbReference type="ChEBI" id="CHEBI:49883"/>
    </ligand>
</feature>
<feature type="binding site" evidence="1">
    <location>
        <position position="51"/>
    </location>
    <ligand>
        <name>[4Fe-4S] cluster</name>
        <dbReference type="ChEBI" id="CHEBI:49883"/>
    </ligand>
</feature>
<feature type="binding site" evidence="1">
    <location>
        <position position="79"/>
    </location>
    <ligand>
        <name>[4Fe-4S] cluster</name>
        <dbReference type="ChEBI" id="CHEBI:49883"/>
    </ligand>
</feature>
<feature type="binding site" evidence="1">
    <location>
        <position position="81"/>
    </location>
    <ligand>
        <name>Mo-bis(molybdopterin guanine dinucleotide)</name>
        <dbReference type="ChEBI" id="CHEBI:60539"/>
    </ligand>
</feature>
<feature type="binding site" evidence="1">
    <location>
        <position position="148"/>
    </location>
    <ligand>
        <name>Mo-bis(molybdopterin guanine dinucleotide)</name>
        <dbReference type="ChEBI" id="CHEBI:60539"/>
    </ligand>
</feature>
<feature type="binding site" evidence="1">
    <location>
        <position position="173"/>
    </location>
    <ligand>
        <name>Mo-bis(molybdopterin guanine dinucleotide)</name>
        <dbReference type="ChEBI" id="CHEBI:60539"/>
    </ligand>
</feature>
<feature type="binding site" evidence="1">
    <location>
        <position position="177"/>
    </location>
    <ligand>
        <name>Mo-bis(molybdopterin guanine dinucleotide)</name>
        <dbReference type="ChEBI" id="CHEBI:60539"/>
    </ligand>
</feature>
<feature type="binding site" evidence="1">
    <location>
        <begin position="210"/>
        <end position="217"/>
    </location>
    <ligand>
        <name>Mo-bis(molybdopterin guanine dinucleotide)</name>
        <dbReference type="ChEBI" id="CHEBI:60539"/>
    </ligand>
</feature>
<feature type="binding site" evidence="1">
    <location>
        <begin position="242"/>
        <end position="246"/>
    </location>
    <ligand>
        <name>Mo-bis(molybdopterin guanine dinucleotide)</name>
        <dbReference type="ChEBI" id="CHEBI:60539"/>
    </ligand>
</feature>
<feature type="binding site" evidence="1">
    <location>
        <begin position="261"/>
        <end position="263"/>
    </location>
    <ligand>
        <name>Mo-bis(molybdopterin guanine dinucleotide)</name>
        <dbReference type="ChEBI" id="CHEBI:60539"/>
    </ligand>
</feature>
<feature type="binding site" evidence="1">
    <location>
        <position position="372"/>
    </location>
    <ligand>
        <name>Mo-bis(molybdopterin guanine dinucleotide)</name>
        <dbReference type="ChEBI" id="CHEBI:60539"/>
    </ligand>
</feature>
<feature type="binding site" evidence="1">
    <location>
        <position position="376"/>
    </location>
    <ligand>
        <name>Mo-bis(molybdopterin guanine dinucleotide)</name>
        <dbReference type="ChEBI" id="CHEBI:60539"/>
    </ligand>
</feature>
<feature type="binding site" evidence="1">
    <location>
        <position position="482"/>
    </location>
    <ligand>
        <name>Mo-bis(molybdopterin guanine dinucleotide)</name>
        <dbReference type="ChEBI" id="CHEBI:60539"/>
    </ligand>
</feature>
<feature type="binding site" evidence="1">
    <location>
        <begin position="508"/>
        <end position="509"/>
    </location>
    <ligand>
        <name>Mo-bis(molybdopterin guanine dinucleotide)</name>
        <dbReference type="ChEBI" id="CHEBI:60539"/>
    </ligand>
</feature>
<feature type="binding site" evidence="1">
    <location>
        <position position="531"/>
    </location>
    <ligand>
        <name>Mo-bis(molybdopterin guanine dinucleotide)</name>
        <dbReference type="ChEBI" id="CHEBI:60539"/>
    </ligand>
</feature>
<feature type="binding site" evidence="1">
    <location>
        <position position="558"/>
    </location>
    <ligand>
        <name>Mo-bis(molybdopterin guanine dinucleotide)</name>
        <dbReference type="ChEBI" id="CHEBI:60539"/>
    </ligand>
</feature>
<feature type="binding site" evidence="1">
    <location>
        <begin position="717"/>
        <end position="726"/>
    </location>
    <ligand>
        <name>Mo-bis(molybdopterin guanine dinucleotide)</name>
        <dbReference type="ChEBI" id="CHEBI:60539"/>
    </ligand>
</feature>
<feature type="binding site" evidence="1">
    <location>
        <position position="793"/>
    </location>
    <ligand>
        <name>substrate</name>
    </ligand>
</feature>
<feature type="binding site" evidence="1">
    <location>
        <position position="801"/>
    </location>
    <ligand>
        <name>Mo-bis(molybdopterin guanine dinucleotide)</name>
        <dbReference type="ChEBI" id="CHEBI:60539"/>
    </ligand>
</feature>
<feature type="binding site" evidence="1">
    <location>
        <position position="818"/>
    </location>
    <ligand>
        <name>Mo-bis(molybdopterin guanine dinucleotide)</name>
        <dbReference type="ChEBI" id="CHEBI:60539"/>
    </ligand>
</feature>
<gene>
    <name evidence="1" type="primary">napA</name>
    <name type="ordered locus">HS_1508</name>
</gene>
<protein>
    <recommendedName>
        <fullName evidence="1">Periplasmic nitrate reductase</fullName>
        <ecNumber evidence="1">1.9.6.1</ecNumber>
    </recommendedName>
</protein>
<name>NAPA_HISS1</name>
<comment type="function">
    <text evidence="1">Catalytic subunit of the periplasmic nitrate reductase complex NapAB. Receives electrons from NapB and catalyzes the reduction of nitrate to nitrite.</text>
</comment>
<comment type="catalytic activity">
    <reaction evidence="1">
        <text>2 Fe(II)-[cytochrome] + nitrate + 2 H(+) = 2 Fe(III)-[cytochrome] + nitrite + H2O</text>
        <dbReference type="Rhea" id="RHEA:12909"/>
        <dbReference type="Rhea" id="RHEA-COMP:11777"/>
        <dbReference type="Rhea" id="RHEA-COMP:11778"/>
        <dbReference type="ChEBI" id="CHEBI:15377"/>
        <dbReference type="ChEBI" id="CHEBI:15378"/>
        <dbReference type="ChEBI" id="CHEBI:16301"/>
        <dbReference type="ChEBI" id="CHEBI:17632"/>
        <dbReference type="ChEBI" id="CHEBI:29033"/>
        <dbReference type="ChEBI" id="CHEBI:29034"/>
        <dbReference type="EC" id="1.9.6.1"/>
    </reaction>
</comment>
<comment type="cofactor">
    <cofactor evidence="1">
        <name>[4Fe-4S] cluster</name>
        <dbReference type="ChEBI" id="CHEBI:49883"/>
    </cofactor>
    <text evidence="1">Binds 1 [4Fe-4S] cluster.</text>
</comment>
<comment type="cofactor">
    <cofactor evidence="1">
        <name>Mo-bis(molybdopterin guanine dinucleotide)</name>
        <dbReference type="ChEBI" id="CHEBI:60539"/>
    </cofactor>
    <text evidence="1">Binds 1 molybdenum-bis(molybdopterin guanine dinucleotide) (Mo-bis-MGD) cofactor per subunit.</text>
</comment>
<comment type="subunit">
    <text evidence="1">Component of the periplasmic nitrate reductase NapAB complex composed of NapA and NapB.</text>
</comment>
<comment type="subcellular location">
    <subcellularLocation>
        <location evidence="1">Periplasm</location>
    </subcellularLocation>
</comment>
<comment type="PTM">
    <text evidence="1">Predicted to be exported by the Tat system. The position of the signal peptide cleavage has not been experimentally proven.</text>
</comment>
<comment type="similarity">
    <text evidence="1">Belongs to the prokaryotic molybdopterin-containing oxidoreductase family. NasA/NapA/NarB subfamily.</text>
</comment>
<dbReference type="EC" id="1.9.6.1" evidence="1"/>
<dbReference type="EMBL" id="CP000436">
    <property type="protein sequence ID" value="ABI25781.1"/>
    <property type="molecule type" value="Genomic_DNA"/>
</dbReference>
<dbReference type="SMR" id="Q0I5G9"/>
<dbReference type="KEGG" id="hso:HS_1508"/>
<dbReference type="eggNOG" id="COG0243">
    <property type="taxonomic scope" value="Bacteria"/>
</dbReference>
<dbReference type="HOGENOM" id="CLU_000422_13_4_6"/>
<dbReference type="GO" id="GO:0016020">
    <property type="term" value="C:membrane"/>
    <property type="evidence" value="ECO:0007669"/>
    <property type="project" value="TreeGrafter"/>
</dbReference>
<dbReference type="GO" id="GO:0009325">
    <property type="term" value="C:nitrate reductase complex"/>
    <property type="evidence" value="ECO:0007669"/>
    <property type="project" value="TreeGrafter"/>
</dbReference>
<dbReference type="GO" id="GO:0042597">
    <property type="term" value="C:periplasmic space"/>
    <property type="evidence" value="ECO:0007669"/>
    <property type="project" value="UniProtKB-SubCell"/>
</dbReference>
<dbReference type="GO" id="GO:0051539">
    <property type="term" value="F:4 iron, 4 sulfur cluster binding"/>
    <property type="evidence" value="ECO:0007669"/>
    <property type="project" value="UniProtKB-KW"/>
</dbReference>
<dbReference type="GO" id="GO:0009055">
    <property type="term" value="F:electron transfer activity"/>
    <property type="evidence" value="ECO:0007669"/>
    <property type="project" value="UniProtKB-UniRule"/>
</dbReference>
<dbReference type="GO" id="GO:0005506">
    <property type="term" value="F:iron ion binding"/>
    <property type="evidence" value="ECO:0007669"/>
    <property type="project" value="UniProtKB-UniRule"/>
</dbReference>
<dbReference type="GO" id="GO:0030151">
    <property type="term" value="F:molybdenum ion binding"/>
    <property type="evidence" value="ECO:0007669"/>
    <property type="project" value="InterPro"/>
</dbReference>
<dbReference type="GO" id="GO:0043546">
    <property type="term" value="F:molybdopterin cofactor binding"/>
    <property type="evidence" value="ECO:0007669"/>
    <property type="project" value="InterPro"/>
</dbReference>
<dbReference type="GO" id="GO:0050140">
    <property type="term" value="F:nitrate reductase (cytochrome) activity"/>
    <property type="evidence" value="ECO:0007669"/>
    <property type="project" value="UniProtKB-EC"/>
</dbReference>
<dbReference type="GO" id="GO:0045333">
    <property type="term" value="P:cellular respiration"/>
    <property type="evidence" value="ECO:0007669"/>
    <property type="project" value="UniProtKB-ARBA"/>
</dbReference>
<dbReference type="GO" id="GO:0006777">
    <property type="term" value="P:Mo-molybdopterin cofactor biosynthetic process"/>
    <property type="evidence" value="ECO:0007669"/>
    <property type="project" value="UniProtKB-UniRule"/>
</dbReference>
<dbReference type="GO" id="GO:0042128">
    <property type="term" value="P:nitrate assimilation"/>
    <property type="evidence" value="ECO:0007669"/>
    <property type="project" value="UniProtKB-UniRule"/>
</dbReference>
<dbReference type="CDD" id="cd02791">
    <property type="entry name" value="MopB_CT_Nitrate-R-NapA-like"/>
    <property type="match status" value="1"/>
</dbReference>
<dbReference type="CDD" id="cd02754">
    <property type="entry name" value="MopB_Nitrate-R-NapA-like"/>
    <property type="match status" value="1"/>
</dbReference>
<dbReference type="FunFam" id="2.40.40.20:FF:000005">
    <property type="entry name" value="Periplasmic nitrate reductase"/>
    <property type="match status" value="1"/>
</dbReference>
<dbReference type="Gene3D" id="2.40.40.20">
    <property type="match status" value="1"/>
</dbReference>
<dbReference type="Gene3D" id="3.30.200.210">
    <property type="match status" value="1"/>
</dbReference>
<dbReference type="Gene3D" id="3.40.50.740">
    <property type="match status" value="1"/>
</dbReference>
<dbReference type="Gene3D" id="3.40.228.10">
    <property type="entry name" value="Dimethylsulfoxide Reductase, domain 2"/>
    <property type="match status" value="1"/>
</dbReference>
<dbReference type="HAMAP" id="MF_01630">
    <property type="entry name" value="Nitrate_reduct_NapA"/>
    <property type="match status" value="1"/>
</dbReference>
<dbReference type="InterPro" id="IPR009010">
    <property type="entry name" value="Asp_de-COase-like_dom_sf"/>
</dbReference>
<dbReference type="InterPro" id="IPR041957">
    <property type="entry name" value="CT_Nitrate-R-NapA-like"/>
</dbReference>
<dbReference type="InterPro" id="IPR006657">
    <property type="entry name" value="MoPterin_dinucl-bd_dom"/>
</dbReference>
<dbReference type="InterPro" id="IPR006656">
    <property type="entry name" value="Mopterin_OxRdtase"/>
</dbReference>
<dbReference type="InterPro" id="IPR006963">
    <property type="entry name" value="Mopterin_OxRdtase_4Fe-4S_dom"/>
</dbReference>
<dbReference type="InterPro" id="IPR027467">
    <property type="entry name" value="MopterinOxRdtase_cofactor_BS"/>
</dbReference>
<dbReference type="InterPro" id="IPR010051">
    <property type="entry name" value="Periplasm_NO3_reductase_lsu"/>
</dbReference>
<dbReference type="InterPro" id="IPR050123">
    <property type="entry name" value="Prok_molybdopt-oxidoreductase"/>
</dbReference>
<dbReference type="InterPro" id="IPR006311">
    <property type="entry name" value="TAT_signal"/>
</dbReference>
<dbReference type="InterPro" id="IPR019546">
    <property type="entry name" value="TAT_signal_bac_arc"/>
</dbReference>
<dbReference type="NCBIfam" id="TIGR01706">
    <property type="entry name" value="NAPA"/>
    <property type="match status" value="1"/>
</dbReference>
<dbReference type="NCBIfam" id="NF010055">
    <property type="entry name" value="PRK13532.1"/>
    <property type="match status" value="1"/>
</dbReference>
<dbReference type="NCBIfam" id="TIGR01409">
    <property type="entry name" value="TAT_signal_seq"/>
    <property type="match status" value="1"/>
</dbReference>
<dbReference type="PANTHER" id="PTHR43105:SF11">
    <property type="entry name" value="PERIPLASMIC NITRATE REDUCTASE"/>
    <property type="match status" value="1"/>
</dbReference>
<dbReference type="PANTHER" id="PTHR43105">
    <property type="entry name" value="RESPIRATORY NITRATE REDUCTASE"/>
    <property type="match status" value="1"/>
</dbReference>
<dbReference type="Pfam" id="PF04879">
    <property type="entry name" value="Molybdop_Fe4S4"/>
    <property type="match status" value="1"/>
</dbReference>
<dbReference type="Pfam" id="PF00384">
    <property type="entry name" value="Molybdopterin"/>
    <property type="match status" value="1"/>
</dbReference>
<dbReference type="Pfam" id="PF01568">
    <property type="entry name" value="Molydop_binding"/>
    <property type="match status" value="1"/>
</dbReference>
<dbReference type="PIRSF" id="PIRSF000144">
    <property type="entry name" value="CbbBc"/>
    <property type="match status" value="1"/>
</dbReference>
<dbReference type="SMART" id="SM00926">
    <property type="entry name" value="Molybdop_Fe4S4"/>
    <property type="match status" value="1"/>
</dbReference>
<dbReference type="SUPFAM" id="SSF50692">
    <property type="entry name" value="ADC-like"/>
    <property type="match status" value="1"/>
</dbReference>
<dbReference type="SUPFAM" id="SSF53706">
    <property type="entry name" value="Formate dehydrogenase/DMSO reductase, domains 1-3"/>
    <property type="match status" value="1"/>
</dbReference>
<dbReference type="PROSITE" id="PS51669">
    <property type="entry name" value="4FE4S_MOW_BIS_MGD"/>
    <property type="match status" value="1"/>
</dbReference>
<dbReference type="PROSITE" id="PS00551">
    <property type="entry name" value="MOLYBDOPTERIN_PROK_1"/>
    <property type="match status" value="1"/>
</dbReference>
<dbReference type="PROSITE" id="PS51318">
    <property type="entry name" value="TAT"/>
    <property type="match status" value="1"/>
</dbReference>
<organism>
    <name type="scientific">Histophilus somni (strain 129Pt)</name>
    <name type="common">Haemophilus somnus</name>
    <dbReference type="NCBI Taxonomy" id="205914"/>
    <lineage>
        <taxon>Bacteria</taxon>
        <taxon>Pseudomonadati</taxon>
        <taxon>Pseudomonadota</taxon>
        <taxon>Gammaproteobacteria</taxon>
        <taxon>Pasteurellales</taxon>
        <taxon>Pasteurellaceae</taxon>
        <taxon>Histophilus</taxon>
    </lineage>
</organism>
<proteinExistence type="inferred from homology"/>
<sequence length="827" mass="93016">MNLSRRDFMKANAALAAASVAGLIIPVKNVNAADTSITWDKAVCRFCGTGCAVLVGTKDGRVVASQGDPDAEVNRGLNCIKGYFLPKIMYGKDRLTHPMLRMKNGQYDKEGEFTPVTWDFAFKTMAEKFKSALKAKGPNGVGMFTSGQSTIFEGVAKSKLFKAGLLSNNIDPNARHCMASAAVAFVRTFGIDEPMGCYDDIEHADAFVLWGSNMAEMHPILWSRISDRRLANPDTVSVNVLSTFEHRSFELADLGILLKPQSDLAILNYIANYLIENNAINREFIEKHTKFKRGETDIGYGLRPQDPREQIAKNVKTAGKMYDSSFEEFKKLVAPYTLEKAHEISGVPKEQLEKLAKLYADPNKKVVSYWTMGINQHTRGVWANHLIYNIHLLTGKISLPGCGPFSLTGQPSACGTAREVGTFIHRLPADLVVTKPEHRKIAEKIWKLPEGLISDKLGFHAVAQSRALKDGKMQVLWQMCNNNMQAGPNINEETYPGWRNPDNFIVVSDPYPTVSALSADLILPTAMWVEKEGAYGNAERRTQFWRQQVKAPGEAKSDLWQLVEFSKYFTTDEVWPAEILAKNPAYQGKTLYEVLYLNGQVNQYSNDELKGRLNDEAYHFGFYIQKGLFEEYASFGRGHGHDLADFDTYHKARGLRWPVVDGKETLWRYREGYDPYVKAGEGVSFYGQADKRAVILAVPYEPPAEVPDREYDLWLTTGRILEHWHTGSMTRRVPELHRSFPNNLVWMNPNDAKKRGLKHGDKIKVISRRGEITSYIDTRGRNKCPEGLIYTTFFDAGQLANKLILDATDPISKETDFKKCAVKVVKA</sequence>
<keyword id="KW-0004">4Fe-4S</keyword>
<keyword id="KW-0249">Electron transport</keyword>
<keyword id="KW-0408">Iron</keyword>
<keyword id="KW-0411">Iron-sulfur</keyword>
<keyword id="KW-0479">Metal-binding</keyword>
<keyword id="KW-0500">Molybdenum</keyword>
<keyword id="KW-0534">Nitrate assimilation</keyword>
<keyword id="KW-0560">Oxidoreductase</keyword>
<keyword id="KW-0574">Periplasm</keyword>
<keyword id="KW-0732">Signal</keyword>
<keyword id="KW-0813">Transport</keyword>
<accession>Q0I5G9</accession>
<evidence type="ECO:0000255" key="1">
    <source>
        <dbReference type="HAMAP-Rule" id="MF_01630"/>
    </source>
</evidence>
<reference key="1">
    <citation type="journal article" date="2007" name="J. Bacteriol.">
        <title>Complete genome sequence of Haemophilus somnus (Histophilus somni) strain 129Pt and comparison to Haemophilus ducreyi 35000HP and Haemophilus influenzae Rd.</title>
        <authorList>
            <person name="Challacombe J.F."/>
            <person name="Duncan A.J."/>
            <person name="Brettin T.S."/>
            <person name="Bruce D."/>
            <person name="Chertkov O."/>
            <person name="Detter J.C."/>
            <person name="Han C.S."/>
            <person name="Misra M."/>
            <person name="Richardson P."/>
            <person name="Tapia R."/>
            <person name="Thayer N."/>
            <person name="Xie G."/>
            <person name="Inzana T.J."/>
        </authorList>
    </citation>
    <scope>NUCLEOTIDE SEQUENCE [LARGE SCALE GENOMIC DNA]</scope>
    <source>
        <strain>129Pt</strain>
    </source>
</reference>